<accession>O02119</accession>
<sequence length="138" mass="14938">MFVKLCGILAFAVTYASSDCLQCICKKESECKPVGCNDDVGSLSCGYYQIKLSYYKDCGQPGKRAGESVEAAWRRCSDELDCASTCVQSYYNRYKKQCAGTGQGACEIMARNHNGGPRGCKKSATLGYWNGIKGLGCS</sequence>
<comment type="function">
    <text evidence="1">Has bacteriolytic activity against Gram-positive bacteria.</text>
</comment>
<comment type="catalytic activity">
    <reaction evidence="1">
        <text>Hydrolysis of (1-&gt;4)-beta-linkages between N-acetylmuramic acid and N-acetyl-D-glucosamine residues in a peptidoglycan and between N-acetyl-D-glucosamine residues in chitodextrins.</text>
        <dbReference type="EC" id="3.2.1.17"/>
    </reaction>
</comment>
<comment type="tissue specificity">
    <text evidence="5">Expressed in pharyngeal gland cells and duct projections, coelomocytes and intestine.</text>
</comment>
<comment type="induction">
    <text evidence="5">Induced by Gram-positive bacterium M.nematophilum CBX102 infection but not by Gram-negative bacterium P.aeruginosa PAO1 infection.</text>
</comment>
<comment type="similarity">
    <text evidence="4">Belongs to the glycosyl hydrolase 22 family. Type-I lysozyme subfamily.</text>
</comment>
<name>ILYS6_CAEEL</name>
<feature type="signal peptide" evidence="3">
    <location>
        <begin position="1"/>
        <end position="18"/>
    </location>
</feature>
<feature type="chain" id="PRO_5004156808" description="Invertebrate-type lysozyme 6" evidence="3">
    <location>
        <begin position="19"/>
        <end position="138"/>
    </location>
</feature>
<feature type="domain" description="I-type lysozyme" evidence="4">
    <location>
        <begin position="19"/>
        <end position="138"/>
    </location>
</feature>
<feature type="active site" description="Proton donor" evidence="4">
    <location>
        <position position="28"/>
    </location>
</feature>
<feature type="active site" description="Nucleophile" evidence="4">
    <location>
        <position position="39"/>
    </location>
</feature>
<feature type="binding site" evidence="2">
    <location>
        <begin position="51"/>
        <end position="57"/>
    </location>
    <ligand>
        <name>substrate</name>
    </ligand>
</feature>
<feature type="binding site" evidence="2">
    <location>
        <position position="90"/>
    </location>
    <ligand>
        <name>substrate</name>
    </ligand>
</feature>
<feature type="binding site" evidence="2">
    <location>
        <begin position="113"/>
        <end position="115"/>
    </location>
    <ligand>
        <name>substrate</name>
    </ligand>
</feature>
<feature type="disulfide bond" evidence="4">
    <location>
        <begin position="20"/>
        <end position="106"/>
    </location>
</feature>
<feature type="disulfide bond" evidence="4">
    <location>
        <begin position="25"/>
        <end position="31"/>
    </location>
</feature>
<feature type="disulfide bond" evidence="4">
    <location>
        <begin position="36"/>
        <end position="45"/>
    </location>
</feature>
<feature type="disulfide bond" evidence="4">
    <location>
        <begin position="58"/>
        <end position="86"/>
    </location>
</feature>
<feature type="disulfide bond" evidence="4">
    <location>
        <begin position="76"/>
        <end position="82"/>
    </location>
</feature>
<feature type="disulfide bond" evidence="4">
    <location>
        <begin position="98"/>
        <end position="120"/>
    </location>
</feature>
<keyword id="KW-0044">Antibiotic</keyword>
<keyword id="KW-0929">Antimicrobial</keyword>
<keyword id="KW-0081">Bacteriolytic enzyme</keyword>
<keyword id="KW-1015">Disulfide bond</keyword>
<keyword id="KW-0326">Glycosidase</keyword>
<keyword id="KW-0378">Hydrolase</keyword>
<keyword id="KW-1185">Reference proteome</keyword>
<keyword id="KW-0732">Signal</keyword>
<protein>
    <recommendedName>
        <fullName evidence="6">Invertebrate-type lysozyme 6</fullName>
        <ecNumber evidence="1">3.2.1.17</ecNumber>
    </recommendedName>
    <alternativeName>
        <fullName evidence="6">1,4-beta-N-acetylmuramidase</fullName>
    </alternativeName>
</protein>
<dbReference type="EC" id="3.2.1.17" evidence="1"/>
<dbReference type="EMBL" id="BX284604">
    <property type="protein sequence ID" value="CCD66766.1"/>
    <property type="molecule type" value="Genomic_DNA"/>
</dbReference>
<dbReference type="RefSeq" id="NP_500470.2">
    <property type="nucleotide sequence ID" value="NM_068069.4"/>
</dbReference>
<dbReference type="SMR" id="O02119"/>
<dbReference type="FunCoup" id="O02119">
    <property type="interactions" value="4"/>
</dbReference>
<dbReference type="STRING" id="6239.W03D2.7.1"/>
<dbReference type="CAZy" id="GH22">
    <property type="family name" value="Glycoside Hydrolase Family 22"/>
</dbReference>
<dbReference type="MEROPS" id="S81.001"/>
<dbReference type="PaxDb" id="6239-W03D2.7"/>
<dbReference type="PeptideAtlas" id="O02119"/>
<dbReference type="EnsemblMetazoa" id="W03D2.7.1">
    <property type="protein sequence ID" value="W03D2.7.1"/>
    <property type="gene ID" value="WBGene00020982"/>
</dbReference>
<dbReference type="GeneID" id="177164"/>
<dbReference type="KEGG" id="cel:CELE_W03D2.7"/>
<dbReference type="UCSC" id="W03D2.7">
    <property type="organism name" value="c. elegans"/>
</dbReference>
<dbReference type="AGR" id="WB:WBGene00020982"/>
<dbReference type="CTD" id="177164"/>
<dbReference type="WormBase" id="W03D2.7">
    <property type="protein sequence ID" value="CE44604"/>
    <property type="gene ID" value="WBGene00020982"/>
    <property type="gene designation" value="ilys-6"/>
</dbReference>
<dbReference type="eggNOG" id="ENOG502SAEY">
    <property type="taxonomic scope" value="Eukaryota"/>
</dbReference>
<dbReference type="GeneTree" id="ENSGT00940000166559"/>
<dbReference type="HOGENOM" id="CLU_130604_1_0_1"/>
<dbReference type="InParanoid" id="O02119"/>
<dbReference type="OMA" id="SWRSCAN"/>
<dbReference type="OrthoDB" id="6337871at2759"/>
<dbReference type="PhylomeDB" id="O02119"/>
<dbReference type="PRO" id="PR:O02119"/>
<dbReference type="Proteomes" id="UP000001940">
    <property type="component" value="Chromosome IV"/>
</dbReference>
<dbReference type="Bgee" id="WBGene00020982">
    <property type="expression patterns" value="Expressed in embryo"/>
</dbReference>
<dbReference type="GO" id="GO:0003796">
    <property type="term" value="F:lysozyme activity"/>
    <property type="evidence" value="ECO:0000318"/>
    <property type="project" value="GO_Central"/>
</dbReference>
<dbReference type="GO" id="GO:0050830">
    <property type="term" value="P:defense response to Gram-positive bacterium"/>
    <property type="evidence" value="ECO:0000318"/>
    <property type="project" value="GO_Central"/>
</dbReference>
<dbReference type="GO" id="GO:0031640">
    <property type="term" value="P:killing of cells of another organism"/>
    <property type="evidence" value="ECO:0007669"/>
    <property type="project" value="UniProtKB-KW"/>
</dbReference>
<dbReference type="CDD" id="cd16890">
    <property type="entry name" value="lyz_i"/>
    <property type="match status" value="1"/>
</dbReference>
<dbReference type="FunFam" id="1.10.530.10:FF:000023">
    <property type="entry name" value="Invertebrate-type lysozyme"/>
    <property type="match status" value="1"/>
</dbReference>
<dbReference type="Gene3D" id="1.10.530.10">
    <property type="match status" value="1"/>
</dbReference>
<dbReference type="InterPro" id="IPR008597">
    <property type="entry name" value="Invert_lysozyme"/>
</dbReference>
<dbReference type="InterPro" id="IPR023346">
    <property type="entry name" value="Lysozyme-like_dom_sf"/>
</dbReference>
<dbReference type="PANTHER" id="PTHR11195">
    <property type="entry name" value="DESTABILASE-RELATED"/>
    <property type="match status" value="1"/>
</dbReference>
<dbReference type="PANTHER" id="PTHR11195:SF13">
    <property type="entry name" value="INVERTEBRATE-TYPE LYSOZYME 2-RELATED"/>
    <property type="match status" value="1"/>
</dbReference>
<dbReference type="Pfam" id="PF05497">
    <property type="entry name" value="Destabilase"/>
    <property type="match status" value="1"/>
</dbReference>
<dbReference type="SUPFAM" id="SSF53955">
    <property type="entry name" value="Lysozyme-like"/>
    <property type="match status" value="1"/>
</dbReference>
<dbReference type="PROSITE" id="PS51909">
    <property type="entry name" value="LYSOZYME_I"/>
    <property type="match status" value="1"/>
</dbReference>
<gene>
    <name evidence="8" type="primary">ilys-6</name>
    <name evidence="8" type="ORF">W03D2.7</name>
</gene>
<proteinExistence type="evidence at transcript level"/>
<evidence type="ECO:0000250" key="1">
    <source>
        <dbReference type="UniProtKB" id="O76357"/>
    </source>
</evidence>
<evidence type="ECO:0000250" key="2">
    <source>
        <dbReference type="UniProtKB" id="Q8IU26"/>
    </source>
</evidence>
<evidence type="ECO:0000255" key="3"/>
<evidence type="ECO:0000255" key="4">
    <source>
        <dbReference type="PROSITE-ProRule" id="PRU01257"/>
    </source>
</evidence>
<evidence type="ECO:0000269" key="5">
    <source>
    </source>
</evidence>
<evidence type="ECO:0000305" key="6"/>
<evidence type="ECO:0000312" key="7">
    <source>
        <dbReference type="Proteomes" id="UP000001940"/>
    </source>
</evidence>
<evidence type="ECO:0000312" key="8">
    <source>
        <dbReference type="WormBase" id="W03D2.7"/>
    </source>
</evidence>
<reference evidence="7" key="1">
    <citation type="journal article" date="1998" name="Science">
        <title>Genome sequence of the nematode C. elegans: a platform for investigating biology.</title>
        <authorList>
            <consortium name="The C. elegans sequencing consortium"/>
        </authorList>
    </citation>
    <scope>NUCLEOTIDE SEQUENCE [LARGE SCALE GENOMIC DNA]</scope>
    <source>
        <strain evidence="7">Bristol N2</strain>
    </source>
</reference>
<reference evidence="6" key="2">
    <citation type="journal article" date="2016" name="PLoS Pathog.">
        <title>The invertebrate lysozyme effector ILYS-3 is systemically activated in response to danger signals and confers antimicrobial protection in C. elegans.</title>
        <authorList>
            <person name="Gravato-Nobre M.J."/>
            <person name="Vaz F."/>
            <person name="Filipe S."/>
            <person name="Chalmers R."/>
            <person name="Hodgkin J."/>
        </authorList>
    </citation>
    <scope>TISSUE SPECIFICITY</scope>
    <scope>INDUCTION</scope>
</reference>
<organism evidence="7">
    <name type="scientific">Caenorhabditis elegans</name>
    <dbReference type="NCBI Taxonomy" id="6239"/>
    <lineage>
        <taxon>Eukaryota</taxon>
        <taxon>Metazoa</taxon>
        <taxon>Ecdysozoa</taxon>
        <taxon>Nematoda</taxon>
        <taxon>Chromadorea</taxon>
        <taxon>Rhabditida</taxon>
        <taxon>Rhabditina</taxon>
        <taxon>Rhabditomorpha</taxon>
        <taxon>Rhabditoidea</taxon>
        <taxon>Rhabditidae</taxon>
        <taxon>Peloderinae</taxon>
        <taxon>Caenorhabditis</taxon>
    </lineage>
</organism>